<proteinExistence type="inferred from homology"/>
<feature type="chain" id="PRO_0000105279" description="Glutamyl-tRNA(Gln) amidotransferase subunit C">
    <location>
        <begin position="1"/>
        <end position="91"/>
    </location>
</feature>
<accession>O51318</accession>
<comment type="function">
    <text evidence="1">Allows the formation of correctly charged Asn-tRNA(Asn) or Gln-tRNA(Gln) through the transamidation of misacylated Asp-tRNA(Asn) or Glu-tRNA(Gln) in organisms which lack either or both of asparaginyl-tRNA or glutaminyl-tRNA synthetases. The reaction takes place in the presence of glutamine and ATP through an activated phospho-Asp-tRNA(Asn) or phospho-Glu-tRNA(Gln) (By similarity).</text>
</comment>
<comment type="catalytic activity">
    <reaction>
        <text>L-glutamyl-tRNA(Gln) + L-glutamine + ATP + H2O = L-glutaminyl-tRNA(Gln) + L-glutamate + ADP + phosphate + H(+)</text>
        <dbReference type="Rhea" id="RHEA:17521"/>
        <dbReference type="Rhea" id="RHEA-COMP:9681"/>
        <dbReference type="Rhea" id="RHEA-COMP:9684"/>
        <dbReference type="ChEBI" id="CHEBI:15377"/>
        <dbReference type="ChEBI" id="CHEBI:15378"/>
        <dbReference type="ChEBI" id="CHEBI:29985"/>
        <dbReference type="ChEBI" id="CHEBI:30616"/>
        <dbReference type="ChEBI" id="CHEBI:43474"/>
        <dbReference type="ChEBI" id="CHEBI:58359"/>
        <dbReference type="ChEBI" id="CHEBI:78520"/>
        <dbReference type="ChEBI" id="CHEBI:78521"/>
        <dbReference type="ChEBI" id="CHEBI:456216"/>
    </reaction>
</comment>
<comment type="catalytic activity">
    <reaction>
        <text>L-aspartyl-tRNA(Asn) + L-glutamine + ATP + H2O = L-asparaginyl-tRNA(Asn) + L-glutamate + ADP + phosphate + 2 H(+)</text>
        <dbReference type="Rhea" id="RHEA:14513"/>
        <dbReference type="Rhea" id="RHEA-COMP:9674"/>
        <dbReference type="Rhea" id="RHEA-COMP:9677"/>
        <dbReference type="ChEBI" id="CHEBI:15377"/>
        <dbReference type="ChEBI" id="CHEBI:15378"/>
        <dbReference type="ChEBI" id="CHEBI:29985"/>
        <dbReference type="ChEBI" id="CHEBI:30616"/>
        <dbReference type="ChEBI" id="CHEBI:43474"/>
        <dbReference type="ChEBI" id="CHEBI:58359"/>
        <dbReference type="ChEBI" id="CHEBI:78515"/>
        <dbReference type="ChEBI" id="CHEBI:78516"/>
        <dbReference type="ChEBI" id="CHEBI:456216"/>
    </reaction>
</comment>
<comment type="subunit">
    <text evidence="1">Heterotrimer of A, B and C subunits.</text>
</comment>
<comment type="similarity">
    <text evidence="2">Belongs to the GatC family.</text>
</comment>
<organism>
    <name type="scientific">Borreliella burgdorferi (strain ATCC 35210 / DSM 4680 / CIP 102532 / B31)</name>
    <name type="common">Borrelia burgdorferi</name>
    <dbReference type="NCBI Taxonomy" id="224326"/>
    <lineage>
        <taxon>Bacteria</taxon>
        <taxon>Pseudomonadati</taxon>
        <taxon>Spirochaetota</taxon>
        <taxon>Spirochaetia</taxon>
        <taxon>Spirochaetales</taxon>
        <taxon>Borreliaceae</taxon>
        <taxon>Borreliella</taxon>
    </lineage>
</organism>
<protein>
    <recommendedName>
        <fullName>Glutamyl-tRNA(Gln) amidotransferase subunit C</fullName>
        <shortName>Glu-ADT subunit C</shortName>
        <ecNumber>6.3.5.-</ecNumber>
    </recommendedName>
</protein>
<keyword id="KW-0067">ATP-binding</keyword>
<keyword id="KW-0436">Ligase</keyword>
<keyword id="KW-0547">Nucleotide-binding</keyword>
<keyword id="KW-0648">Protein biosynthesis</keyword>
<keyword id="KW-1185">Reference proteome</keyword>
<dbReference type="EC" id="6.3.5.-"/>
<dbReference type="EMBL" id="AE000783">
    <property type="protein sequence ID" value="AAC66714.1"/>
    <property type="molecule type" value="Genomic_DNA"/>
</dbReference>
<dbReference type="PIR" id="F70142">
    <property type="entry name" value="F70142"/>
</dbReference>
<dbReference type="RefSeq" id="NP_212477.1">
    <property type="nucleotide sequence ID" value="NC_001318.1"/>
</dbReference>
<dbReference type="RefSeq" id="WP_002657793.1">
    <property type="nucleotide sequence ID" value="NC_001318.1"/>
</dbReference>
<dbReference type="SMR" id="O51318"/>
<dbReference type="STRING" id="224326.BB_0343"/>
<dbReference type="PaxDb" id="224326-BB_0343"/>
<dbReference type="EnsemblBacteria" id="AAC66714">
    <property type="protein sequence ID" value="AAC66714"/>
    <property type="gene ID" value="BB_0343"/>
</dbReference>
<dbReference type="GeneID" id="56567772"/>
<dbReference type="KEGG" id="bbu:BB_0343"/>
<dbReference type="PATRIC" id="fig|224326.49.peg.739"/>
<dbReference type="HOGENOM" id="CLU_2421111_0_0_12"/>
<dbReference type="OrthoDB" id="350658at2"/>
<dbReference type="Proteomes" id="UP000001807">
    <property type="component" value="Chromosome"/>
</dbReference>
<dbReference type="GO" id="GO:0050566">
    <property type="term" value="F:asparaginyl-tRNA synthase (glutamine-hydrolyzing) activity"/>
    <property type="evidence" value="ECO:0007669"/>
    <property type="project" value="RHEA"/>
</dbReference>
<dbReference type="GO" id="GO:0005524">
    <property type="term" value="F:ATP binding"/>
    <property type="evidence" value="ECO:0007669"/>
    <property type="project" value="UniProtKB-KW"/>
</dbReference>
<dbReference type="GO" id="GO:0050567">
    <property type="term" value="F:glutaminyl-tRNA synthase (glutamine-hydrolyzing) activity"/>
    <property type="evidence" value="ECO:0007669"/>
    <property type="project" value="RHEA"/>
</dbReference>
<dbReference type="GO" id="GO:0006450">
    <property type="term" value="P:regulation of translational fidelity"/>
    <property type="evidence" value="ECO:0007669"/>
    <property type="project" value="InterPro"/>
</dbReference>
<dbReference type="GO" id="GO:0006412">
    <property type="term" value="P:translation"/>
    <property type="evidence" value="ECO:0007669"/>
    <property type="project" value="UniProtKB-KW"/>
</dbReference>
<dbReference type="InterPro" id="IPR036113">
    <property type="entry name" value="Asp/Glu-ADT_sf_sub_c"/>
</dbReference>
<dbReference type="InterPro" id="IPR003837">
    <property type="entry name" value="GatC"/>
</dbReference>
<dbReference type="NCBIfam" id="TIGR00135">
    <property type="entry name" value="gatC"/>
    <property type="match status" value="1"/>
</dbReference>
<dbReference type="SUPFAM" id="SSF141000">
    <property type="entry name" value="Glu-tRNAGln amidotransferase C subunit"/>
    <property type="match status" value="1"/>
</dbReference>
<name>GATC_BORBU</name>
<sequence>MKDIHLKNSLKLSLVTLSRESEDKFISKFEKVIKLVNKISNFEVQINFNANKKKISTLREDKVEFSLSIEAIKKLSNSFLDGYFSSPKILE</sequence>
<evidence type="ECO:0000250" key="1"/>
<evidence type="ECO:0000305" key="2"/>
<reference key="1">
    <citation type="journal article" date="1997" name="Nature">
        <title>Genomic sequence of a Lyme disease spirochaete, Borrelia burgdorferi.</title>
        <authorList>
            <person name="Fraser C.M."/>
            <person name="Casjens S."/>
            <person name="Huang W.M."/>
            <person name="Sutton G.G."/>
            <person name="Clayton R.A."/>
            <person name="Lathigra R."/>
            <person name="White O."/>
            <person name="Ketchum K.A."/>
            <person name="Dodson R.J."/>
            <person name="Hickey E.K."/>
            <person name="Gwinn M.L."/>
            <person name="Dougherty B.A."/>
            <person name="Tomb J.-F."/>
            <person name="Fleischmann R.D."/>
            <person name="Richardson D.L."/>
            <person name="Peterson J.D."/>
            <person name="Kerlavage A.R."/>
            <person name="Quackenbush J."/>
            <person name="Salzberg S.L."/>
            <person name="Hanson M."/>
            <person name="van Vugt R."/>
            <person name="Palmer N."/>
            <person name="Adams M.D."/>
            <person name="Gocayne J.D."/>
            <person name="Weidman J.F."/>
            <person name="Utterback T.R."/>
            <person name="Watthey L."/>
            <person name="McDonald L.A."/>
            <person name="Artiach P."/>
            <person name="Bowman C."/>
            <person name="Garland S.A."/>
            <person name="Fujii C."/>
            <person name="Cotton M.D."/>
            <person name="Horst K."/>
            <person name="Roberts K.M."/>
            <person name="Hatch B."/>
            <person name="Smith H.O."/>
            <person name="Venter J.C."/>
        </authorList>
    </citation>
    <scope>NUCLEOTIDE SEQUENCE [LARGE SCALE GENOMIC DNA]</scope>
    <source>
        <strain>ATCC 35210 / DSM 4680 / CIP 102532 / B31</strain>
    </source>
</reference>
<gene>
    <name type="primary">gatC</name>
    <name type="ordered locus">BB_0343</name>
</gene>